<name>TPIS_STRP2</name>
<keyword id="KW-0002">3D-structure</keyword>
<keyword id="KW-0963">Cytoplasm</keyword>
<keyword id="KW-0312">Gluconeogenesis</keyword>
<keyword id="KW-0324">Glycolysis</keyword>
<keyword id="KW-0413">Isomerase</keyword>
<keyword id="KW-1185">Reference proteome</keyword>
<dbReference type="EC" id="5.3.1.1" evidence="1"/>
<dbReference type="EMBL" id="CP000410">
    <property type="protein sequence ID" value="ABJ55094.1"/>
    <property type="molecule type" value="Genomic_DNA"/>
</dbReference>
<dbReference type="RefSeq" id="WP_000087897.1">
    <property type="nucleotide sequence ID" value="NZ_JAMLJR010000008.1"/>
</dbReference>
<dbReference type="PDB" id="5IBX">
    <property type="method" value="X-ray"/>
    <property type="resolution" value="1.65 A"/>
    <property type="chains" value="A/B/C/D/E/F/G/H=1-252"/>
</dbReference>
<dbReference type="PDBsum" id="5IBX"/>
<dbReference type="SMR" id="Q04JH4"/>
<dbReference type="PaxDb" id="373153-SPD_1404"/>
<dbReference type="GeneID" id="45653189"/>
<dbReference type="KEGG" id="spd:SPD_1404"/>
<dbReference type="eggNOG" id="COG0149">
    <property type="taxonomic scope" value="Bacteria"/>
</dbReference>
<dbReference type="HOGENOM" id="CLU_024251_2_3_9"/>
<dbReference type="BioCyc" id="SPNE373153:G1G6V-1510-MONOMER"/>
<dbReference type="UniPathway" id="UPA00109">
    <property type="reaction ID" value="UER00189"/>
</dbReference>
<dbReference type="UniPathway" id="UPA00138"/>
<dbReference type="Proteomes" id="UP000001452">
    <property type="component" value="Chromosome"/>
</dbReference>
<dbReference type="GO" id="GO:0005829">
    <property type="term" value="C:cytosol"/>
    <property type="evidence" value="ECO:0007669"/>
    <property type="project" value="TreeGrafter"/>
</dbReference>
<dbReference type="GO" id="GO:0004807">
    <property type="term" value="F:triose-phosphate isomerase activity"/>
    <property type="evidence" value="ECO:0007669"/>
    <property type="project" value="UniProtKB-UniRule"/>
</dbReference>
<dbReference type="GO" id="GO:0006094">
    <property type="term" value="P:gluconeogenesis"/>
    <property type="evidence" value="ECO:0007669"/>
    <property type="project" value="UniProtKB-UniRule"/>
</dbReference>
<dbReference type="GO" id="GO:0046166">
    <property type="term" value="P:glyceraldehyde-3-phosphate biosynthetic process"/>
    <property type="evidence" value="ECO:0007669"/>
    <property type="project" value="TreeGrafter"/>
</dbReference>
<dbReference type="GO" id="GO:0019563">
    <property type="term" value="P:glycerol catabolic process"/>
    <property type="evidence" value="ECO:0007669"/>
    <property type="project" value="TreeGrafter"/>
</dbReference>
<dbReference type="GO" id="GO:0006096">
    <property type="term" value="P:glycolytic process"/>
    <property type="evidence" value="ECO:0007669"/>
    <property type="project" value="UniProtKB-UniRule"/>
</dbReference>
<dbReference type="CDD" id="cd00311">
    <property type="entry name" value="TIM"/>
    <property type="match status" value="1"/>
</dbReference>
<dbReference type="FunFam" id="3.20.20.70:FF:000016">
    <property type="entry name" value="Triosephosphate isomerase"/>
    <property type="match status" value="1"/>
</dbReference>
<dbReference type="Gene3D" id="3.20.20.70">
    <property type="entry name" value="Aldolase class I"/>
    <property type="match status" value="1"/>
</dbReference>
<dbReference type="HAMAP" id="MF_00147_B">
    <property type="entry name" value="TIM_B"/>
    <property type="match status" value="1"/>
</dbReference>
<dbReference type="InterPro" id="IPR013785">
    <property type="entry name" value="Aldolase_TIM"/>
</dbReference>
<dbReference type="InterPro" id="IPR035990">
    <property type="entry name" value="TIM_sf"/>
</dbReference>
<dbReference type="InterPro" id="IPR022896">
    <property type="entry name" value="TrioseP_Isoase_bac/euk"/>
</dbReference>
<dbReference type="InterPro" id="IPR000652">
    <property type="entry name" value="Triosephosphate_isomerase"/>
</dbReference>
<dbReference type="InterPro" id="IPR020861">
    <property type="entry name" value="Triosephosphate_isomerase_AS"/>
</dbReference>
<dbReference type="NCBIfam" id="TIGR00419">
    <property type="entry name" value="tim"/>
    <property type="match status" value="1"/>
</dbReference>
<dbReference type="PANTHER" id="PTHR21139">
    <property type="entry name" value="TRIOSEPHOSPHATE ISOMERASE"/>
    <property type="match status" value="1"/>
</dbReference>
<dbReference type="PANTHER" id="PTHR21139:SF42">
    <property type="entry name" value="TRIOSEPHOSPHATE ISOMERASE"/>
    <property type="match status" value="1"/>
</dbReference>
<dbReference type="Pfam" id="PF00121">
    <property type="entry name" value="TIM"/>
    <property type="match status" value="1"/>
</dbReference>
<dbReference type="SUPFAM" id="SSF51351">
    <property type="entry name" value="Triosephosphate isomerase (TIM)"/>
    <property type="match status" value="1"/>
</dbReference>
<dbReference type="PROSITE" id="PS00171">
    <property type="entry name" value="TIM_1"/>
    <property type="match status" value="1"/>
</dbReference>
<dbReference type="PROSITE" id="PS51440">
    <property type="entry name" value="TIM_2"/>
    <property type="match status" value="1"/>
</dbReference>
<sequence length="252" mass="26550">MSRKPFIAGNWKMNKNPEEAKAFVEAVASKLPSSDLVEAGIAAPALDLTTVLAVAKGSNLKVAAQNCYFENAGAFTGETSPQVLKEIGTDYVVIGHSERRDYFHETDEDINKKAKAIFANGMLPIICCGESLETYEAGKAAEFVGAQVSAALAGLTAEQVAASVIAYEPIWAIGTGKSASQDDAQKMCKVVRDVVAADFGQEVADKVRVQYGGSVKPENVASYMACPDVDGALVGGASLEAESFLALLDFVK</sequence>
<comment type="function">
    <text evidence="1">Involved in the gluconeogenesis. Catalyzes stereospecifically the conversion of dihydroxyacetone phosphate (DHAP) to D-glyceraldehyde-3-phosphate (G3P).</text>
</comment>
<comment type="catalytic activity">
    <reaction evidence="1">
        <text>D-glyceraldehyde 3-phosphate = dihydroxyacetone phosphate</text>
        <dbReference type="Rhea" id="RHEA:18585"/>
        <dbReference type="ChEBI" id="CHEBI:57642"/>
        <dbReference type="ChEBI" id="CHEBI:59776"/>
        <dbReference type="EC" id="5.3.1.1"/>
    </reaction>
</comment>
<comment type="pathway">
    <text evidence="1">Carbohydrate biosynthesis; gluconeogenesis.</text>
</comment>
<comment type="pathway">
    <text evidence="1">Carbohydrate degradation; glycolysis; D-glyceraldehyde 3-phosphate from glycerone phosphate: step 1/1.</text>
</comment>
<comment type="subunit">
    <text evidence="1">Homodimer.</text>
</comment>
<comment type="subcellular location">
    <subcellularLocation>
        <location evidence="1">Cytoplasm</location>
    </subcellularLocation>
</comment>
<comment type="similarity">
    <text evidence="1">Belongs to the triosephosphate isomerase family.</text>
</comment>
<protein>
    <recommendedName>
        <fullName evidence="1">Triosephosphate isomerase</fullName>
        <shortName evidence="1">TIM</shortName>
        <shortName evidence="1">TPI</shortName>
        <ecNumber evidence="1">5.3.1.1</ecNumber>
    </recommendedName>
    <alternativeName>
        <fullName evidence="1">Triose-phosphate isomerase</fullName>
    </alternativeName>
</protein>
<reference key="1">
    <citation type="journal article" date="2007" name="J. Bacteriol.">
        <title>Genome sequence of Avery's virulent serotype 2 strain D39 of Streptococcus pneumoniae and comparison with that of unencapsulated laboratory strain R6.</title>
        <authorList>
            <person name="Lanie J.A."/>
            <person name="Ng W.-L."/>
            <person name="Kazmierczak K.M."/>
            <person name="Andrzejewski T.M."/>
            <person name="Davidsen T.M."/>
            <person name="Wayne K.J."/>
            <person name="Tettelin H."/>
            <person name="Glass J.I."/>
            <person name="Winkler M.E."/>
        </authorList>
    </citation>
    <scope>NUCLEOTIDE SEQUENCE [LARGE SCALE GENOMIC DNA]</scope>
    <source>
        <strain>D39 / NCTC 7466</strain>
    </source>
</reference>
<proteinExistence type="evidence at protein level"/>
<accession>Q04JH4</accession>
<evidence type="ECO:0000255" key="1">
    <source>
        <dbReference type="HAMAP-Rule" id="MF_00147"/>
    </source>
</evidence>
<evidence type="ECO:0007829" key="2">
    <source>
        <dbReference type="PDB" id="5IBX"/>
    </source>
</evidence>
<feature type="chain" id="PRO_0000307572" description="Triosephosphate isomerase">
    <location>
        <begin position="1"/>
        <end position="252"/>
    </location>
</feature>
<feature type="active site" description="Electrophile" evidence="1">
    <location>
        <position position="96"/>
    </location>
</feature>
<feature type="active site" description="Proton acceptor" evidence="1">
    <location>
        <position position="168"/>
    </location>
</feature>
<feature type="binding site" evidence="1">
    <location>
        <begin position="10"/>
        <end position="12"/>
    </location>
    <ligand>
        <name>substrate</name>
    </ligand>
</feature>
<feature type="binding site" evidence="1">
    <location>
        <position position="174"/>
    </location>
    <ligand>
        <name>substrate</name>
    </ligand>
</feature>
<feature type="binding site" evidence="1">
    <location>
        <position position="214"/>
    </location>
    <ligand>
        <name>substrate</name>
    </ligand>
</feature>
<feature type="binding site" evidence="1">
    <location>
        <begin position="235"/>
        <end position="236"/>
    </location>
    <ligand>
        <name>substrate</name>
    </ligand>
</feature>
<feature type="strand" evidence="2">
    <location>
        <begin position="6"/>
        <end position="10"/>
    </location>
</feature>
<feature type="helix" evidence="2">
    <location>
        <begin position="17"/>
        <end position="27"/>
    </location>
</feature>
<feature type="helix" evidence="2">
    <location>
        <begin position="28"/>
        <end position="30"/>
    </location>
</feature>
<feature type="turn" evidence="2">
    <location>
        <begin position="34"/>
        <end position="36"/>
    </location>
</feature>
<feature type="strand" evidence="2">
    <location>
        <begin position="38"/>
        <end position="43"/>
    </location>
</feature>
<feature type="helix" evidence="2">
    <location>
        <begin position="45"/>
        <end position="47"/>
    </location>
</feature>
<feature type="helix" evidence="2">
    <location>
        <begin position="48"/>
        <end position="55"/>
    </location>
</feature>
<feature type="strand" evidence="2">
    <location>
        <begin position="58"/>
        <end position="65"/>
    </location>
</feature>
<feature type="strand" evidence="2">
    <location>
        <begin position="69"/>
        <end position="74"/>
    </location>
</feature>
<feature type="helix" evidence="2">
    <location>
        <begin position="81"/>
        <end position="87"/>
    </location>
</feature>
<feature type="strand" evidence="2">
    <location>
        <begin position="91"/>
        <end position="95"/>
    </location>
</feature>
<feature type="helix" evidence="2">
    <location>
        <begin position="97"/>
        <end position="102"/>
    </location>
</feature>
<feature type="helix" evidence="2">
    <location>
        <begin position="107"/>
        <end position="119"/>
    </location>
</feature>
<feature type="strand" evidence="2">
    <location>
        <begin position="123"/>
        <end position="128"/>
    </location>
</feature>
<feature type="helix" evidence="2">
    <location>
        <begin position="132"/>
        <end position="136"/>
    </location>
</feature>
<feature type="helix" evidence="2">
    <location>
        <begin position="140"/>
        <end position="152"/>
    </location>
</feature>
<feature type="helix" evidence="2">
    <location>
        <begin position="157"/>
        <end position="162"/>
    </location>
</feature>
<feature type="strand" evidence="2">
    <location>
        <begin position="164"/>
        <end position="167"/>
    </location>
</feature>
<feature type="helix" evidence="2">
    <location>
        <begin position="170"/>
        <end position="172"/>
    </location>
</feature>
<feature type="strand" evidence="2">
    <location>
        <begin position="173"/>
        <end position="176"/>
    </location>
</feature>
<feature type="helix" evidence="2">
    <location>
        <begin position="181"/>
        <end position="199"/>
    </location>
</feature>
<feature type="helix" evidence="2">
    <location>
        <begin position="201"/>
        <end position="204"/>
    </location>
</feature>
<feature type="strand" evidence="2">
    <location>
        <begin position="207"/>
        <end position="211"/>
    </location>
</feature>
<feature type="turn" evidence="2">
    <location>
        <begin position="217"/>
        <end position="219"/>
    </location>
</feature>
<feature type="helix" evidence="2">
    <location>
        <begin position="220"/>
        <end position="224"/>
    </location>
</feature>
<feature type="strand" evidence="2">
    <location>
        <begin position="231"/>
        <end position="235"/>
    </location>
</feature>
<feature type="helix" evidence="2">
    <location>
        <begin position="236"/>
        <end position="238"/>
    </location>
</feature>
<feature type="helix" evidence="2">
    <location>
        <begin position="241"/>
        <end position="246"/>
    </location>
</feature>
<feature type="turn" evidence="2">
    <location>
        <begin position="247"/>
        <end position="250"/>
    </location>
</feature>
<organism>
    <name type="scientific">Streptococcus pneumoniae serotype 2 (strain D39 / NCTC 7466)</name>
    <dbReference type="NCBI Taxonomy" id="373153"/>
    <lineage>
        <taxon>Bacteria</taxon>
        <taxon>Bacillati</taxon>
        <taxon>Bacillota</taxon>
        <taxon>Bacilli</taxon>
        <taxon>Lactobacillales</taxon>
        <taxon>Streptococcaceae</taxon>
        <taxon>Streptococcus</taxon>
    </lineage>
</organism>
<gene>
    <name evidence="1" type="primary">tpiA</name>
    <name type="ordered locus">SPD_1404</name>
</gene>